<reference key="1">
    <citation type="submission" date="2009-01" db="EMBL/GenBank/DDBJ databases">
        <title>Complete sequence of Clostridium cellulolyticum H10.</title>
        <authorList>
            <consortium name="US DOE Joint Genome Institute"/>
            <person name="Lucas S."/>
            <person name="Copeland A."/>
            <person name="Lapidus A."/>
            <person name="Glavina del Rio T."/>
            <person name="Dalin E."/>
            <person name="Tice H."/>
            <person name="Bruce D."/>
            <person name="Goodwin L."/>
            <person name="Pitluck S."/>
            <person name="Chertkov O."/>
            <person name="Saunders E."/>
            <person name="Brettin T."/>
            <person name="Detter J.C."/>
            <person name="Han C."/>
            <person name="Larimer F."/>
            <person name="Land M."/>
            <person name="Hauser L."/>
            <person name="Kyrpides N."/>
            <person name="Ivanova N."/>
            <person name="Zhou J."/>
            <person name="Richardson P."/>
        </authorList>
    </citation>
    <scope>NUCLEOTIDE SEQUENCE [LARGE SCALE GENOMIC DNA]</scope>
    <source>
        <strain>ATCC 35319 / DSM 5812 / JCM 6584 / H10</strain>
    </source>
</reference>
<keyword id="KW-0169">Cobalamin biosynthesis</keyword>
<keyword id="KW-0328">Glycosyltransferase</keyword>
<keyword id="KW-1185">Reference proteome</keyword>
<keyword id="KW-0808">Transferase</keyword>
<dbReference type="EC" id="2.4.2.21" evidence="1"/>
<dbReference type="EMBL" id="CP001348">
    <property type="protein sequence ID" value="ACL75027.1"/>
    <property type="molecule type" value="Genomic_DNA"/>
</dbReference>
<dbReference type="RefSeq" id="WP_015924196.1">
    <property type="nucleotide sequence ID" value="NC_011898.1"/>
</dbReference>
<dbReference type="SMR" id="B8I7A3"/>
<dbReference type="STRING" id="394503.Ccel_0646"/>
<dbReference type="KEGG" id="cce:Ccel_0646"/>
<dbReference type="eggNOG" id="COG2038">
    <property type="taxonomic scope" value="Bacteria"/>
</dbReference>
<dbReference type="HOGENOM" id="CLU_002982_0_0_9"/>
<dbReference type="OrthoDB" id="9781491at2"/>
<dbReference type="UniPathway" id="UPA00061">
    <property type="reaction ID" value="UER00516"/>
</dbReference>
<dbReference type="Proteomes" id="UP000001349">
    <property type="component" value="Chromosome"/>
</dbReference>
<dbReference type="GO" id="GO:0008939">
    <property type="term" value="F:nicotinate-nucleotide-dimethylbenzimidazole phosphoribosyltransferase activity"/>
    <property type="evidence" value="ECO:0007669"/>
    <property type="project" value="UniProtKB-UniRule"/>
</dbReference>
<dbReference type="GO" id="GO:0009236">
    <property type="term" value="P:cobalamin biosynthetic process"/>
    <property type="evidence" value="ECO:0007669"/>
    <property type="project" value="UniProtKB-KW"/>
</dbReference>
<dbReference type="CDD" id="cd02439">
    <property type="entry name" value="DMB-PRT_CobT"/>
    <property type="match status" value="1"/>
</dbReference>
<dbReference type="FunFam" id="3.40.50.10210:FF:000001">
    <property type="entry name" value="Nicotinate-nucleotide--dimethylbenzimidazole phosphoribosyltransferase"/>
    <property type="match status" value="1"/>
</dbReference>
<dbReference type="Gene3D" id="1.10.1610.10">
    <property type="match status" value="1"/>
</dbReference>
<dbReference type="Gene3D" id="3.40.50.10210">
    <property type="match status" value="1"/>
</dbReference>
<dbReference type="HAMAP" id="MF_00230">
    <property type="entry name" value="CobT"/>
    <property type="match status" value="1"/>
</dbReference>
<dbReference type="InterPro" id="IPR003200">
    <property type="entry name" value="Nict_dMeBzImd_PRibTrfase"/>
</dbReference>
<dbReference type="InterPro" id="IPR017846">
    <property type="entry name" value="Nict_dMeBzImd_PRibTrfase_bact"/>
</dbReference>
<dbReference type="InterPro" id="IPR023195">
    <property type="entry name" value="Nict_dMeBzImd_PRibTrfase_N"/>
</dbReference>
<dbReference type="InterPro" id="IPR036087">
    <property type="entry name" value="Nict_dMeBzImd_PRibTrfase_sf"/>
</dbReference>
<dbReference type="NCBIfam" id="TIGR03160">
    <property type="entry name" value="cobT_DBIPRT"/>
    <property type="match status" value="1"/>
</dbReference>
<dbReference type="NCBIfam" id="NF000996">
    <property type="entry name" value="PRK00105.1"/>
    <property type="match status" value="1"/>
</dbReference>
<dbReference type="PANTHER" id="PTHR43463">
    <property type="entry name" value="NICOTINATE-NUCLEOTIDE--DIMETHYLBENZIMIDAZOLE PHOSPHORIBOSYLTRANSFERASE"/>
    <property type="match status" value="1"/>
</dbReference>
<dbReference type="PANTHER" id="PTHR43463:SF1">
    <property type="entry name" value="NICOTINATE-NUCLEOTIDE--DIMETHYLBENZIMIDAZOLE PHOSPHORIBOSYLTRANSFERASE"/>
    <property type="match status" value="1"/>
</dbReference>
<dbReference type="Pfam" id="PF02277">
    <property type="entry name" value="DBI_PRT"/>
    <property type="match status" value="1"/>
</dbReference>
<dbReference type="SUPFAM" id="SSF52733">
    <property type="entry name" value="Nicotinate mononucleotide:5,6-dimethylbenzimidazole phosphoribosyltransferase (CobT)"/>
    <property type="match status" value="1"/>
</dbReference>
<comment type="function">
    <text evidence="1">Catalyzes the synthesis of alpha-ribazole-5'-phosphate from nicotinate mononucleotide (NAMN) and 5,6-dimethylbenzimidazole (DMB).</text>
</comment>
<comment type="catalytic activity">
    <reaction evidence="1">
        <text>5,6-dimethylbenzimidazole + nicotinate beta-D-ribonucleotide = alpha-ribazole 5'-phosphate + nicotinate + H(+)</text>
        <dbReference type="Rhea" id="RHEA:11196"/>
        <dbReference type="ChEBI" id="CHEBI:15378"/>
        <dbReference type="ChEBI" id="CHEBI:15890"/>
        <dbReference type="ChEBI" id="CHEBI:32544"/>
        <dbReference type="ChEBI" id="CHEBI:57502"/>
        <dbReference type="ChEBI" id="CHEBI:57918"/>
        <dbReference type="EC" id="2.4.2.21"/>
    </reaction>
</comment>
<comment type="pathway">
    <text evidence="1">Nucleoside biosynthesis; alpha-ribazole biosynthesis; alpha-ribazole from 5,6-dimethylbenzimidazole: step 1/2.</text>
</comment>
<comment type="similarity">
    <text evidence="1">Belongs to the CobT family.</text>
</comment>
<accession>B8I7A3</accession>
<evidence type="ECO:0000255" key="1">
    <source>
        <dbReference type="HAMAP-Rule" id="MF_00230"/>
    </source>
</evidence>
<organism>
    <name type="scientific">Ruminiclostridium cellulolyticum (strain ATCC 35319 / DSM 5812 / JCM 6584 / H10)</name>
    <name type="common">Clostridium cellulolyticum</name>
    <dbReference type="NCBI Taxonomy" id="394503"/>
    <lineage>
        <taxon>Bacteria</taxon>
        <taxon>Bacillati</taxon>
        <taxon>Bacillota</taxon>
        <taxon>Clostridia</taxon>
        <taxon>Eubacteriales</taxon>
        <taxon>Oscillospiraceae</taxon>
        <taxon>Ruminiclostridium</taxon>
    </lineage>
</organism>
<sequence>MTFEEAINSIKELNIETMQKAQKRLDNLTKPLGSLGRLEEIVKQLAGITGELFPCVKNKKIVIMCADNGVVEEGVSSCPKSVTSSVTQNFLKGFTGVNVLSRHSRADIVVVDVGVDDDIDCPGVINRKIRKGTWNIMKGPAMTRNEAIKAIETGIEIVGKLKEKGVNLLGTGEMGVGNTTTSSAVASVLIGNDIGEMVGKGAGLTQKGLINKIEIIKNAIDINKPNPSDPIDVLAKVGGFDIAALTGCFLGAAAYRLPVMIDGFISATAALAAIKIKPECRNYILPSHGSAEPGNKKIMEALDMSPMLLLEMRLGEGSGAALAFHIIDAAVAAYNEMGTFGDAKIEQYKPLE</sequence>
<name>COBT_RUMCH</name>
<gene>
    <name evidence="1" type="primary">cobT</name>
    <name type="ordered locus">Ccel_0646</name>
</gene>
<feature type="chain" id="PRO_1000125103" description="Nicotinate-nucleotide--dimethylbenzimidazole phosphoribosyltransferase">
    <location>
        <begin position="1"/>
        <end position="352"/>
    </location>
</feature>
<feature type="active site" description="Proton acceptor" evidence="1">
    <location>
        <position position="316"/>
    </location>
</feature>
<protein>
    <recommendedName>
        <fullName evidence="1">Nicotinate-nucleotide--dimethylbenzimidazole phosphoribosyltransferase</fullName>
        <shortName evidence="1">NN:DBI PRT</shortName>
        <ecNumber evidence="1">2.4.2.21</ecNumber>
    </recommendedName>
    <alternativeName>
        <fullName evidence="1">N(1)-alpha-phosphoribosyltransferase</fullName>
    </alternativeName>
</protein>
<proteinExistence type="inferred from homology"/>